<organism>
    <name type="scientific">Pseudomonas aeruginosa (strain ATCC 15692 / DSM 22644 / CIP 104116 / JCM 14847 / LMG 12228 / 1C / PRS 101 / PAO1)</name>
    <dbReference type="NCBI Taxonomy" id="208964"/>
    <lineage>
        <taxon>Bacteria</taxon>
        <taxon>Pseudomonadati</taxon>
        <taxon>Pseudomonadota</taxon>
        <taxon>Gammaproteobacteria</taxon>
        <taxon>Pseudomonadales</taxon>
        <taxon>Pseudomonadaceae</taxon>
        <taxon>Pseudomonas</taxon>
    </lineage>
</organism>
<name>RARD_PSEAE</name>
<reference key="1">
    <citation type="submission" date="1998-03" db="EMBL/GenBank/DDBJ databases">
        <authorList>
            <person name="Xie G."/>
            <person name="Jensen R.A."/>
        </authorList>
    </citation>
    <scope>NUCLEOTIDE SEQUENCE [GENOMIC DNA]</scope>
    <source>
        <strain>ATCC 15692 / DSM 22644 / CIP 104116 / JCM 14847 / LMG 12228 / 1C / PRS 101 / PAO1</strain>
    </source>
</reference>
<reference key="2">
    <citation type="journal article" date="2000" name="Nature">
        <title>Complete genome sequence of Pseudomonas aeruginosa PAO1, an opportunistic pathogen.</title>
        <authorList>
            <person name="Stover C.K."/>
            <person name="Pham X.-Q.T."/>
            <person name="Erwin A.L."/>
            <person name="Mizoguchi S.D."/>
            <person name="Warrener P."/>
            <person name="Hickey M.J."/>
            <person name="Brinkman F.S.L."/>
            <person name="Hufnagle W.O."/>
            <person name="Kowalik D.J."/>
            <person name="Lagrou M."/>
            <person name="Garber R.L."/>
            <person name="Goltry L."/>
            <person name="Tolentino E."/>
            <person name="Westbrock-Wadman S."/>
            <person name="Yuan Y."/>
            <person name="Brody L.L."/>
            <person name="Coulter S.N."/>
            <person name="Folger K.R."/>
            <person name="Kas A."/>
            <person name="Larbig K."/>
            <person name="Lim R.M."/>
            <person name="Smith K.A."/>
            <person name="Spencer D.H."/>
            <person name="Wong G.K.-S."/>
            <person name="Wu Z."/>
            <person name="Paulsen I.T."/>
            <person name="Reizer J."/>
            <person name="Saier M.H. Jr."/>
            <person name="Hancock R.E.W."/>
            <person name="Lory S."/>
            <person name="Olson M.V."/>
        </authorList>
    </citation>
    <scope>NUCLEOTIDE SEQUENCE [LARGE SCALE GENOMIC DNA]</scope>
    <source>
        <strain>ATCC 15692 / DSM 22644 / CIP 104116 / JCM 14847 / LMG 12228 / 1C / PRS 101 / PAO1</strain>
    </source>
</reference>
<sequence length="299" mass="33469">MRISGQGVLLSLAASVLFVTLPGYVHLLEPLDSLQVVAHRVVWSIPMVFLLVVATRQWPTLRAAWCRLFAEPWLLACFPLTAAMMLLQWGIFIWAPLAGKTLELSLGYFLLPLAMVLVGRVFYGERLTPLQAIAVACALAGVLHEFWLTRAFSWVSLVTALGYPPYFMLRRRMGVDALSGFVFEMLFLLPLALAALYWLGDESQAFREAPRLWLLLPMLGLISALAFGAMMASSRLLPMGLFGILSYVEPVLLFLVAVLFLGEAFRPEQLWTYAPIWLAVLLTGWDSARLLRKQARRGI</sequence>
<proteinExistence type="inferred from homology"/>
<gene>
    <name type="primary">rarD</name>
    <name type="ordered locus">PA3473</name>
</gene>
<keyword id="KW-1003">Cell membrane</keyword>
<keyword id="KW-0472">Membrane</keyword>
<keyword id="KW-1185">Reference proteome</keyword>
<keyword id="KW-0812">Transmembrane</keyword>
<keyword id="KW-1133">Transmembrane helix</keyword>
<keyword id="KW-0813">Transport</keyword>
<accession>O68827</accession>
<comment type="subcellular location">
    <subcellularLocation>
        <location evidence="2">Cell membrane</location>
        <topology evidence="2">Multi-pass membrane protein</topology>
    </subcellularLocation>
</comment>
<comment type="similarity">
    <text evidence="2">Belongs to the EamA transporter family.</text>
</comment>
<protein>
    <recommendedName>
        <fullName>Chloramphenicol-sensitive protein RarD</fullName>
    </recommendedName>
</protein>
<dbReference type="EMBL" id="AF054868">
    <property type="protein sequence ID" value="AAC08598.1"/>
    <property type="molecule type" value="Genomic_DNA"/>
</dbReference>
<dbReference type="EMBL" id="AE004091">
    <property type="protein sequence ID" value="AAG06861.1"/>
    <property type="molecule type" value="Genomic_DNA"/>
</dbReference>
<dbReference type="PIR" id="F83211">
    <property type="entry name" value="F83211"/>
</dbReference>
<dbReference type="RefSeq" id="NP_252163.1">
    <property type="nucleotide sequence ID" value="NC_002516.2"/>
</dbReference>
<dbReference type="RefSeq" id="WP_003103767.1">
    <property type="nucleotide sequence ID" value="NZ_QZGE01000039.1"/>
</dbReference>
<dbReference type="SMR" id="O68827"/>
<dbReference type="STRING" id="208964.PA3473"/>
<dbReference type="TCDB" id="2.A.7.7.1">
    <property type="family name" value="the drug/metabolite transporter (dmt) superfamily"/>
</dbReference>
<dbReference type="PaxDb" id="208964-PA3473"/>
<dbReference type="GeneID" id="878939"/>
<dbReference type="KEGG" id="pae:PA3473"/>
<dbReference type="PATRIC" id="fig|208964.12.peg.3636"/>
<dbReference type="PseudoCAP" id="PA3473"/>
<dbReference type="HOGENOM" id="CLU_054508_2_0_6"/>
<dbReference type="InParanoid" id="O68827"/>
<dbReference type="OrthoDB" id="3250831at2"/>
<dbReference type="PhylomeDB" id="O68827"/>
<dbReference type="BioCyc" id="PAER208964:G1FZ6-3541-MONOMER"/>
<dbReference type="Proteomes" id="UP000002438">
    <property type="component" value="Chromosome"/>
</dbReference>
<dbReference type="GO" id="GO:0005886">
    <property type="term" value="C:plasma membrane"/>
    <property type="evidence" value="ECO:0000318"/>
    <property type="project" value="GO_Central"/>
</dbReference>
<dbReference type="InterPro" id="IPR004626">
    <property type="entry name" value="RarD"/>
</dbReference>
<dbReference type="NCBIfam" id="TIGR00688">
    <property type="entry name" value="rarD"/>
    <property type="match status" value="1"/>
</dbReference>
<dbReference type="SUPFAM" id="SSF103481">
    <property type="entry name" value="Multidrug resistance efflux transporter EmrE"/>
    <property type="match status" value="2"/>
</dbReference>
<evidence type="ECO:0000255" key="1"/>
<evidence type="ECO:0000305" key="2"/>
<feature type="chain" id="PRO_0000108155" description="Chloramphenicol-sensitive protein RarD">
    <location>
        <begin position="1"/>
        <end position="299"/>
    </location>
</feature>
<feature type="transmembrane region" description="Helical" evidence="1">
    <location>
        <begin position="8"/>
        <end position="28"/>
    </location>
</feature>
<feature type="transmembrane region" description="Helical" evidence="1">
    <location>
        <begin position="34"/>
        <end position="54"/>
    </location>
</feature>
<feature type="transmembrane region" description="Helical" evidence="1">
    <location>
        <begin position="74"/>
        <end position="94"/>
    </location>
</feature>
<feature type="transmembrane region" description="Helical" evidence="1">
    <location>
        <begin position="104"/>
        <end position="124"/>
    </location>
</feature>
<feature type="transmembrane region" description="Helical" evidence="1">
    <location>
        <begin position="126"/>
        <end position="146"/>
    </location>
</feature>
<feature type="transmembrane region" description="Helical" evidence="1">
    <location>
        <begin position="147"/>
        <end position="167"/>
    </location>
</feature>
<feature type="transmembrane region" description="Helical" evidence="1">
    <location>
        <begin position="180"/>
        <end position="200"/>
    </location>
</feature>
<feature type="transmembrane region" description="Helical" evidence="1">
    <location>
        <begin position="212"/>
        <end position="232"/>
    </location>
</feature>
<feature type="transmembrane region" description="Helical" evidence="1">
    <location>
        <begin position="241"/>
        <end position="261"/>
    </location>
</feature>
<feature type="transmembrane region" description="Helical" evidence="1">
    <location>
        <begin position="271"/>
        <end position="291"/>
    </location>
</feature>
<feature type="sequence conflict" description="In Ref. 1; AAC08598." evidence="2" ref="1">
    <original>W</original>
    <variation>L</variation>
    <location>
        <position position="58"/>
    </location>
</feature>
<feature type="sequence conflict" description="In Ref. 1; AAC08598." evidence="2" ref="1">
    <original>RLT</original>
    <variation>LLM</variation>
    <location>
        <begin position="126"/>
        <end position="128"/>
    </location>
</feature>
<feature type="sequence conflict" description="In Ref. 1; AAC08598." evidence="2" ref="1">
    <original>A</original>
    <variation>S</variation>
    <location>
        <position position="138"/>
    </location>
</feature>
<feature type="sequence conflict" description="In Ref. 1; AAC08598." evidence="2" ref="1">
    <original>K</original>
    <variation>T</variation>
    <location>
        <position position="293"/>
    </location>
</feature>
<feature type="sequence conflict" description="In Ref. 1; AAC08598." evidence="2" ref="1">
    <original>R</original>
    <variation>Q</variation>
    <location>
        <position position="296"/>
    </location>
</feature>